<dbReference type="EC" id="6.3.4.2" evidence="1"/>
<dbReference type="EMBL" id="CP000627">
    <property type="protein sequence ID" value="ABQ22048.1"/>
    <property type="molecule type" value="Genomic_DNA"/>
</dbReference>
<dbReference type="EMBL" id="CP001235">
    <property type="protein sequence ID" value="ACP10550.1"/>
    <property type="molecule type" value="Genomic_DNA"/>
</dbReference>
<dbReference type="RefSeq" id="WP_000210846.1">
    <property type="nucleotide sequence ID" value="NZ_JAACZH010000010.1"/>
</dbReference>
<dbReference type="SMR" id="A5F5I4"/>
<dbReference type="KEGG" id="vco:VC0395_A2026"/>
<dbReference type="KEGG" id="vcr:VC395_2563"/>
<dbReference type="PATRIC" id="fig|345073.21.peg.2468"/>
<dbReference type="eggNOG" id="COG0504">
    <property type="taxonomic scope" value="Bacteria"/>
</dbReference>
<dbReference type="HOGENOM" id="CLU_011675_5_0_6"/>
<dbReference type="OrthoDB" id="9801107at2"/>
<dbReference type="UniPathway" id="UPA00159">
    <property type="reaction ID" value="UER00277"/>
</dbReference>
<dbReference type="Proteomes" id="UP000000249">
    <property type="component" value="Chromosome 2"/>
</dbReference>
<dbReference type="GO" id="GO:0005829">
    <property type="term" value="C:cytosol"/>
    <property type="evidence" value="ECO:0007669"/>
    <property type="project" value="TreeGrafter"/>
</dbReference>
<dbReference type="GO" id="GO:0005524">
    <property type="term" value="F:ATP binding"/>
    <property type="evidence" value="ECO:0007669"/>
    <property type="project" value="UniProtKB-KW"/>
</dbReference>
<dbReference type="GO" id="GO:0003883">
    <property type="term" value="F:CTP synthase activity"/>
    <property type="evidence" value="ECO:0007669"/>
    <property type="project" value="UniProtKB-UniRule"/>
</dbReference>
<dbReference type="GO" id="GO:0004359">
    <property type="term" value="F:glutaminase activity"/>
    <property type="evidence" value="ECO:0007669"/>
    <property type="project" value="RHEA"/>
</dbReference>
<dbReference type="GO" id="GO:0042802">
    <property type="term" value="F:identical protein binding"/>
    <property type="evidence" value="ECO:0007669"/>
    <property type="project" value="TreeGrafter"/>
</dbReference>
<dbReference type="GO" id="GO:0046872">
    <property type="term" value="F:metal ion binding"/>
    <property type="evidence" value="ECO:0007669"/>
    <property type="project" value="UniProtKB-KW"/>
</dbReference>
<dbReference type="GO" id="GO:0044210">
    <property type="term" value="P:'de novo' CTP biosynthetic process"/>
    <property type="evidence" value="ECO:0007669"/>
    <property type="project" value="UniProtKB-UniRule"/>
</dbReference>
<dbReference type="GO" id="GO:0019856">
    <property type="term" value="P:pyrimidine nucleobase biosynthetic process"/>
    <property type="evidence" value="ECO:0007669"/>
    <property type="project" value="TreeGrafter"/>
</dbReference>
<dbReference type="CDD" id="cd03113">
    <property type="entry name" value="CTPS_N"/>
    <property type="match status" value="1"/>
</dbReference>
<dbReference type="CDD" id="cd01746">
    <property type="entry name" value="GATase1_CTP_Synthase"/>
    <property type="match status" value="1"/>
</dbReference>
<dbReference type="FunFam" id="3.40.50.300:FF:000009">
    <property type="entry name" value="CTP synthase"/>
    <property type="match status" value="1"/>
</dbReference>
<dbReference type="FunFam" id="3.40.50.880:FF:000002">
    <property type="entry name" value="CTP synthase"/>
    <property type="match status" value="1"/>
</dbReference>
<dbReference type="Gene3D" id="3.40.50.880">
    <property type="match status" value="1"/>
</dbReference>
<dbReference type="Gene3D" id="3.40.50.300">
    <property type="entry name" value="P-loop containing nucleotide triphosphate hydrolases"/>
    <property type="match status" value="1"/>
</dbReference>
<dbReference type="HAMAP" id="MF_01227">
    <property type="entry name" value="PyrG"/>
    <property type="match status" value="1"/>
</dbReference>
<dbReference type="InterPro" id="IPR029062">
    <property type="entry name" value="Class_I_gatase-like"/>
</dbReference>
<dbReference type="InterPro" id="IPR004468">
    <property type="entry name" value="CTP_synthase"/>
</dbReference>
<dbReference type="InterPro" id="IPR017456">
    <property type="entry name" value="CTP_synthase_N"/>
</dbReference>
<dbReference type="InterPro" id="IPR017926">
    <property type="entry name" value="GATASE"/>
</dbReference>
<dbReference type="InterPro" id="IPR033828">
    <property type="entry name" value="GATase1_CTP_Synthase"/>
</dbReference>
<dbReference type="InterPro" id="IPR027417">
    <property type="entry name" value="P-loop_NTPase"/>
</dbReference>
<dbReference type="NCBIfam" id="NF003792">
    <property type="entry name" value="PRK05380.1"/>
    <property type="match status" value="1"/>
</dbReference>
<dbReference type="NCBIfam" id="TIGR00337">
    <property type="entry name" value="PyrG"/>
    <property type="match status" value="1"/>
</dbReference>
<dbReference type="PANTHER" id="PTHR11550">
    <property type="entry name" value="CTP SYNTHASE"/>
    <property type="match status" value="1"/>
</dbReference>
<dbReference type="PANTHER" id="PTHR11550:SF0">
    <property type="entry name" value="CTP SYNTHASE-RELATED"/>
    <property type="match status" value="1"/>
</dbReference>
<dbReference type="Pfam" id="PF06418">
    <property type="entry name" value="CTP_synth_N"/>
    <property type="match status" value="1"/>
</dbReference>
<dbReference type="Pfam" id="PF00117">
    <property type="entry name" value="GATase"/>
    <property type="match status" value="1"/>
</dbReference>
<dbReference type="SUPFAM" id="SSF52317">
    <property type="entry name" value="Class I glutamine amidotransferase-like"/>
    <property type="match status" value="1"/>
</dbReference>
<dbReference type="SUPFAM" id="SSF52540">
    <property type="entry name" value="P-loop containing nucleoside triphosphate hydrolases"/>
    <property type="match status" value="1"/>
</dbReference>
<dbReference type="PROSITE" id="PS51273">
    <property type="entry name" value="GATASE_TYPE_1"/>
    <property type="match status" value="1"/>
</dbReference>
<protein>
    <recommendedName>
        <fullName evidence="1">CTP synthase</fullName>
        <ecNumber evidence="1">6.3.4.2</ecNumber>
    </recommendedName>
    <alternativeName>
        <fullName evidence="1">Cytidine 5'-triphosphate synthase</fullName>
    </alternativeName>
    <alternativeName>
        <fullName evidence="1">Cytidine triphosphate synthetase</fullName>
        <shortName evidence="1">CTP synthetase</shortName>
        <shortName evidence="1">CTPS</shortName>
    </alternativeName>
    <alternativeName>
        <fullName evidence="1">UTP--ammonia ligase</fullName>
    </alternativeName>
</protein>
<name>PYRG_VIBC3</name>
<organism>
    <name type="scientific">Vibrio cholerae serotype O1 (strain ATCC 39541 / Classical Ogawa 395 / O395)</name>
    <dbReference type="NCBI Taxonomy" id="345073"/>
    <lineage>
        <taxon>Bacteria</taxon>
        <taxon>Pseudomonadati</taxon>
        <taxon>Pseudomonadota</taxon>
        <taxon>Gammaproteobacteria</taxon>
        <taxon>Vibrionales</taxon>
        <taxon>Vibrionaceae</taxon>
        <taxon>Vibrio</taxon>
    </lineage>
</organism>
<proteinExistence type="inferred from homology"/>
<evidence type="ECO:0000255" key="1">
    <source>
        <dbReference type="HAMAP-Rule" id="MF_01227"/>
    </source>
</evidence>
<accession>A5F5I4</accession>
<accession>C3M4T9</accession>
<feature type="chain" id="PRO_1000139599" description="CTP synthase">
    <location>
        <begin position="1"/>
        <end position="545"/>
    </location>
</feature>
<feature type="domain" description="Glutamine amidotransferase type-1" evidence="1">
    <location>
        <begin position="291"/>
        <end position="542"/>
    </location>
</feature>
<feature type="region of interest" description="Amidoligase domain" evidence="1">
    <location>
        <begin position="1"/>
        <end position="266"/>
    </location>
</feature>
<feature type="active site" description="Nucleophile; for glutamine hydrolysis" evidence="1">
    <location>
        <position position="379"/>
    </location>
</feature>
<feature type="active site" evidence="1">
    <location>
        <position position="515"/>
    </location>
</feature>
<feature type="active site" evidence="1">
    <location>
        <position position="517"/>
    </location>
</feature>
<feature type="binding site" evidence="1">
    <location>
        <position position="14"/>
    </location>
    <ligand>
        <name>CTP</name>
        <dbReference type="ChEBI" id="CHEBI:37563"/>
        <note>allosteric inhibitor</note>
    </ligand>
</feature>
<feature type="binding site" evidence="1">
    <location>
        <position position="14"/>
    </location>
    <ligand>
        <name>UTP</name>
        <dbReference type="ChEBI" id="CHEBI:46398"/>
    </ligand>
</feature>
<feature type="binding site" evidence="1">
    <location>
        <begin position="15"/>
        <end position="20"/>
    </location>
    <ligand>
        <name>ATP</name>
        <dbReference type="ChEBI" id="CHEBI:30616"/>
    </ligand>
</feature>
<feature type="binding site" evidence="1">
    <location>
        <position position="72"/>
    </location>
    <ligand>
        <name>ATP</name>
        <dbReference type="ChEBI" id="CHEBI:30616"/>
    </ligand>
</feature>
<feature type="binding site" evidence="1">
    <location>
        <position position="72"/>
    </location>
    <ligand>
        <name>Mg(2+)</name>
        <dbReference type="ChEBI" id="CHEBI:18420"/>
    </ligand>
</feature>
<feature type="binding site" evidence="1">
    <location>
        <position position="140"/>
    </location>
    <ligand>
        <name>Mg(2+)</name>
        <dbReference type="ChEBI" id="CHEBI:18420"/>
    </ligand>
</feature>
<feature type="binding site" evidence="1">
    <location>
        <begin position="147"/>
        <end position="149"/>
    </location>
    <ligand>
        <name>CTP</name>
        <dbReference type="ChEBI" id="CHEBI:37563"/>
        <note>allosteric inhibitor</note>
    </ligand>
</feature>
<feature type="binding site" evidence="1">
    <location>
        <begin position="187"/>
        <end position="192"/>
    </location>
    <ligand>
        <name>CTP</name>
        <dbReference type="ChEBI" id="CHEBI:37563"/>
        <note>allosteric inhibitor</note>
    </ligand>
</feature>
<feature type="binding site" evidence="1">
    <location>
        <begin position="187"/>
        <end position="192"/>
    </location>
    <ligand>
        <name>UTP</name>
        <dbReference type="ChEBI" id="CHEBI:46398"/>
    </ligand>
</feature>
<feature type="binding site" evidence="1">
    <location>
        <position position="223"/>
    </location>
    <ligand>
        <name>CTP</name>
        <dbReference type="ChEBI" id="CHEBI:37563"/>
        <note>allosteric inhibitor</note>
    </ligand>
</feature>
<feature type="binding site" evidence="1">
    <location>
        <position position="223"/>
    </location>
    <ligand>
        <name>UTP</name>
        <dbReference type="ChEBI" id="CHEBI:46398"/>
    </ligand>
</feature>
<feature type="binding site" evidence="1">
    <location>
        <begin position="239"/>
        <end position="241"/>
    </location>
    <ligand>
        <name>ATP</name>
        <dbReference type="ChEBI" id="CHEBI:30616"/>
    </ligand>
</feature>
<feature type="binding site" evidence="1">
    <location>
        <position position="352"/>
    </location>
    <ligand>
        <name>L-glutamine</name>
        <dbReference type="ChEBI" id="CHEBI:58359"/>
    </ligand>
</feature>
<feature type="binding site" evidence="1">
    <location>
        <begin position="380"/>
        <end position="383"/>
    </location>
    <ligand>
        <name>L-glutamine</name>
        <dbReference type="ChEBI" id="CHEBI:58359"/>
    </ligand>
</feature>
<feature type="binding site" evidence="1">
    <location>
        <position position="403"/>
    </location>
    <ligand>
        <name>L-glutamine</name>
        <dbReference type="ChEBI" id="CHEBI:58359"/>
    </ligand>
</feature>
<feature type="binding site" evidence="1">
    <location>
        <position position="470"/>
    </location>
    <ligand>
        <name>L-glutamine</name>
        <dbReference type="ChEBI" id="CHEBI:58359"/>
    </ligand>
</feature>
<keyword id="KW-0067">ATP-binding</keyword>
<keyword id="KW-0315">Glutamine amidotransferase</keyword>
<keyword id="KW-0436">Ligase</keyword>
<keyword id="KW-0460">Magnesium</keyword>
<keyword id="KW-0479">Metal-binding</keyword>
<keyword id="KW-0547">Nucleotide-binding</keyword>
<keyword id="KW-0665">Pyrimidine biosynthesis</keyword>
<reference key="1">
    <citation type="submission" date="2007-03" db="EMBL/GenBank/DDBJ databases">
        <authorList>
            <person name="Heidelberg J."/>
        </authorList>
    </citation>
    <scope>NUCLEOTIDE SEQUENCE [LARGE SCALE GENOMIC DNA]</scope>
    <source>
        <strain>ATCC 39541 / Classical Ogawa 395 / O395</strain>
    </source>
</reference>
<reference key="2">
    <citation type="journal article" date="2008" name="PLoS ONE">
        <title>A recalibrated molecular clock and independent origins for the cholera pandemic clones.</title>
        <authorList>
            <person name="Feng L."/>
            <person name="Reeves P.R."/>
            <person name="Lan R."/>
            <person name="Ren Y."/>
            <person name="Gao C."/>
            <person name="Zhou Z."/>
            <person name="Ren Y."/>
            <person name="Cheng J."/>
            <person name="Wang W."/>
            <person name="Wang J."/>
            <person name="Qian W."/>
            <person name="Li D."/>
            <person name="Wang L."/>
        </authorList>
    </citation>
    <scope>NUCLEOTIDE SEQUENCE [LARGE SCALE GENOMIC DNA]</scope>
    <source>
        <strain>ATCC 39541 / Classical Ogawa 395 / O395</strain>
    </source>
</reference>
<comment type="function">
    <text evidence="1">Catalyzes the ATP-dependent amination of UTP to CTP with either L-glutamine or ammonia as the source of nitrogen. Regulates intracellular CTP levels through interactions with the four ribonucleotide triphosphates.</text>
</comment>
<comment type="catalytic activity">
    <reaction evidence="1">
        <text>UTP + L-glutamine + ATP + H2O = CTP + L-glutamate + ADP + phosphate + 2 H(+)</text>
        <dbReference type="Rhea" id="RHEA:26426"/>
        <dbReference type="ChEBI" id="CHEBI:15377"/>
        <dbReference type="ChEBI" id="CHEBI:15378"/>
        <dbReference type="ChEBI" id="CHEBI:29985"/>
        <dbReference type="ChEBI" id="CHEBI:30616"/>
        <dbReference type="ChEBI" id="CHEBI:37563"/>
        <dbReference type="ChEBI" id="CHEBI:43474"/>
        <dbReference type="ChEBI" id="CHEBI:46398"/>
        <dbReference type="ChEBI" id="CHEBI:58359"/>
        <dbReference type="ChEBI" id="CHEBI:456216"/>
        <dbReference type="EC" id="6.3.4.2"/>
    </reaction>
</comment>
<comment type="catalytic activity">
    <reaction evidence="1">
        <text>L-glutamine + H2O = L-glutamate + NH4(+)</text>
        <dbReference type="Rhea" id="RHEA:15889"/>
        <dbReference type="ChEBI" id="CHEBI:15377"/>
        <dbReference type="ChEBI" id="CHEBI:28938"/>
        <dbReference type="ChEBI" id="CHEBI:29985"/>
        <dbReference type="ChEBI" id="CHEBI:58359"/>
    </reaction>
</comment>
<comment type="catalytic activity">
    <reaction evidence="1">
        <text>UTP + NH4(+) + ATP = CTP + ADP + phosphate + 2 H(+)</text>
        <dbReference type="Rhea" id="RHEA:16597"/>
        <dbReference type="ChEBI" id="CHEBI:15378"/>
        <dbReference type="ChEBI" id="CHEBI:28938"/>
        <dbReference type="ChEBI" id="CHEBI:30616"/>
        <dbReference type="ChEBI" id="CHEBI:37563"/>
        <dbReference type="ChEBI" id="CHEBI:43474"/>
        <dbReference type="ChEBI" id="CHEBI:46398"/>
        <dbReference type="ChEBI" id="CHEBI:456216"/>
    </reaction>
</comment>
<comment type="activity regulation">
    <text evidence="1">Allosterically activated by GTP, when glutamine is the substrate; GTP has no effect on the reaction when ammonia is the substrate. The allosteric effector GTP functions by stabilizing the protein conformation that binds the tetrahedral intermediate(s) formed during glutamine hydrolysis. Inhibited by the product CTP, via allosteric rather than competitive inhibition.</text>
</comment>
<comment type="pathway">
    <text evidence="1">Pyrimidine metabolism; CTP biosynthesis via de novo pathway; CTP from UDP: step 2/2.</text>
</comment>
<comment type="subunit">
    <text evidence="1">Homotetramer.</text>
</comment>
<comment type="miscellaneous">
    <text evidence="1">CTPSs have evolved a hybrid strategy for distinguishing between UTP and CTP. The overlapping regions of the product feedback inhibitory and substrate sites recognize a common feature in both compounds, the triphosphate moiety. To differentiate isosteric substrate and product pyrimidine rings, an additional pocket far from the expected kinase/ligase catalytic site, specifically recognizes the cytosine and ribose portions of the product inhibitor.</text>
</comment>
<comment type="similarity">
    <text evidence="1">Belongs to the CTP synthase family.</text>
</comment>
<gene>
    <name evidence="1" type="primary">pyrG</name>
    <name type="ordered locus">VC0395_A2026</name>
    <name type="ordered locus">VC395_2563</name>
</gene>
<sequence length="545" mass="59886">MTTNYIFVTGGVVSSLGKGIAAASLAAILEARGLKVTMMKLDPYINVDPGTMSPTQHGEVFVTEDGAETDLDLGHYERFIRTKMTKRNNFTAGRVYADVLRKERRGDYLGATIQVIPHITNAIKDRVIAGSEGHDIAIVEVGGTVGDIESLPFMEAIRQLAIEVGREHAMFMHLTLVPYLAAAGEVKTKPTQHSVKELLSIGIQPDILVCRSDRMIPANERKKIALFCNVPEKAVISMKDVDSIYKIPQLIRSQGLDDLVCARFGINAPEADLSEWEQVIYEEANPTGEVTIGMVGKYTELPDAYKSVNEALKHAGLKNRLSVTIKYVDSQDVETKGTDVLNGLDAILVPGGFGDRGIEGKIRAAQYARENKIPYLGICLGMQVALIEYARNVAGMEGAHSTEFNKNTKYPVVGLITEWVDGEGNVEERSEKSDLGGTMRLGSQLCHLEKGTKAYELYGSATIHERHRHRYEVNNLLRPQIEKAGLKVSGLSADKKLVEVIENPAHPWFVAAQFHPEFTSTPRDGHPLFAGFVKAAGQFQRGELK</sequence>